<comment type="similarity">
    <text evidence="1">Belongs to the bacterial ribosomal protein bS21 family.</text>
</comment>
<keyword id="KW-0687">Ribonucleoprotein</keyword>
<keyword id="KW-0689">Ribosomal protein</keyword>
<feature type="chain" id="PRO_1000133492" description="Small ribosomal subunit protein bS21">
    <location>
        <begin position="1"/>
        <end position="58"/>
    </location>
</feature>
<feature type="region of interest" description="Disordered" evidence="2">
    <location>
        <begin position="39"/>
        <end position="58"/>
    </location>
</feature>
<feature type="compositionally biased region" description="Basic residues" evidence="2">
    <location>
        <begin position="43"/>
        <end position="58"/>
    </location>
</feature>
<proteinExistence type="inferred from homology"/>
<accession>C1CF02</accession>
<dbReference type="EMBL" id="CP000919">
    <property type="protein sequence ID" value="ACO19751.1"/>
    <property type="molecule type" value="Genomic_DNA"/>
</dbReference>
<dbReference type="RefSeq" id="WP_000048055.1">
    <property type="nucleotide sequence ID" value="NC_012466.1"/>
</dbReference>
<dbReference type="SMR" id="C1CF02"/>
<dbReference type="GeneID" id="45653328"/>
<dbReference type="KEGG" id="sjj:SPJ_1313"/>
<dbReference type="HOGENOM" id="CLU_159258_3_2_9"/>
<dbReference type="Proteomes" id="UP000002206">
    <property type="component" value="Chromosome"/>
</dbReference>
<dbReference type="GO" id="GO:1990904">
    <property type="term" value="C:ribonucleoprotein complex"/>
    <property type="evidence" value="ECO:0007669"/>
    <property type="project" value="UniProtKB-KW"/>
</dbReference>
<dbReference type="GO" id="GO:0005840">
    <property type="term" value="C:ribosome"/>
    <property type="evidence" value="ECO:0007669"/>
    <property type="project" value="UniProtKB-KW"/>
</dbReference>
<dbReference type="GO" id="GO:0003735">
    <property type="term" value="F:structural constituent of ribosome"/>
    <property type="evidence" value="ECO:0007669"/>
    <property type="project" value="InterPro"/>
</dbReference>
<dbReference type="GO" id="GO:0006412">
    <property type="term" value="P:translation"/>
    <property type="evidence" value="ECO:0007669"/>
    <property type="project" value="UniProtKB-UniRule"/>
</dbReference>
<dbReference type="Gene3D" id="1.20.5.1150">
    <property type="entry name" value="Ribosomal protein S8"/>
    <property type="match status" value="1"/>
</dbReference>
<dbReference type="HAMAP" id="MF_00358">
    <property type="entry name" value="Ribosomal_bS21"/>
    <property type="match status" value="1"/>
</dbReference>
<dbReference type="InterPro" id="IPR001911">
    <property type="entry name" value="Ribosomal_bS21"/>
</dbReference>
<dbReference type="InterPro" id="IPR018278">
    <property type="entry name" value="Ribosomal_bS21_CS"/>
</dbReference>
<dbReference type="InterPro" id="IPR038380">
    <property type="entry name" value="Ribosomal_bS21_sf"/>
</dbReference>
<dbReference type="NCBIfam" id="TIGR00030">
    <property type="entry name" value="S21p"/>
    <property type="match status" value="1"/>
</dbReference>
<dbReference type="PANTHER" id="PTHR21109">
    <property type="entry name" value="MITOCHONDRIAL 28S RIBOSOMAL PROTEIN S21"/>
    <property type="match status" value="1"/>
</dbReference>
<dbReference type="PANTHER" id="PTHR21109:SF22">
    <property type="entry name" value="SMALL RIBOSOMAL SUBUNIT PROTEIN BS21"/>
    <property type="match status" value="1"/>
</dbReference>
<dbReference type="Pfam" id="PF01165">
    <property type="entry name" value="Ribosomal_S21"/>
    <property type="match status" value="1"/>
</dbReference>
<dbReference type="PRINTS" id="PR00976">
    <property type="entry name" value="RIBOSOMALS21"/>
</dbReference>
<dbReference type="PROSITE" id="PS01181">
    <property type="entry name" value="RIBOSOMAL_S21"/>
    <property type="match status" value="1"/>
</dbReference>
<organism>
    <name type="scientific">Streptococcus pneumoniae (strain JJA)</name>
    <dbReference type="NCBI Taxonomy" id="488222"/>
    <lineage>
        <taxon>Bacteria</taxon>
        <taxon>Bacillati</taxon>
        <taxon>Bacillota</taxon>
        <taxon>Bacilli</taxon>
        <taxon>Lactobacillales</taxon>
        <taxon>Streptococcaceae</taxon>
        <taxon>Streptococcus</taxon>
    </lineage>
</organism>
<evidence type="ECO:0000255" key="1">
    <source>
        <dbReference type="HAMAP-Rule" id="MF_00358"/>
    </source>
</evidence>
<evidence type="ECO:0000256" key="2">
    <source>
        <dbReference type="SAM" id="MobiDB-lite"/>
    </source>
</evidence>
<evidence type="ECO:0000305" key="3"/>
<sequence>MSKTVVRKNESLDDALRRFKRAVTKAGTLQETRKREFYEKPSVKRKRKSEVARKRKKF</sequence>
<protein>
    <recommendedName>
        <fullName evidence="1">Small ribosomal subunit protein bS21</fullName>
    </recommendedName>
    <alternativeName>
        <fullName evidence="3">30S ribosomal protein S21</fullName>
    </alternativeName>
</protein>
<gene>
    <name evidence="1" type="primary">rpsU</name>
    <name type="ordered locus">SPJ_1313</name>
</gene>
<reference key="1">
    <citation type="journal article" date="2010" name="Genome Biol.">
        <title>Structure and dynamics of the pan-genome of Streptococcus pneumoniae and closely related species.</title>
        <authorList>
            <person name="Donati C."/>
            <person name="Hiller N.L."/>
            <person name="Tettelin H."/>
            <person name="Muzzi A."/>
            <person name="Croucher N.J."/>
            <person name="Angiuoli S.V."/>
            <person name="Oggioni M."/>
            <person name="Dunning Hotopp J.C."/>
            <person name="Hu F.Z."/>
            <person name="Riley D.R."/>
            <person name="Covacci A."/>
            <person name="Mitchell T.J."/>
            <person name="Bentley S.D."/>
            <person name="Kilian M."/>
            <person name="Ehrlich G.D."/>
            <person name="Rappuoli R."/>
            <person name="Moxon E.R."/>
            <person name="Masignani V."/>
        </authorList>
    </citation>
    <scope>NUCLEOTIDE SEQUENCE [LARGE SCALE GENOMIC DNA]</scope>
    <source>
        <strain>JJA</strain>
    </source>
</reference>
<name>RS21_STRZJ</name>